<dbReference type="EMBL" id="CP000962">
    <property type="protein sequence ID" value="ACA54551.1"/>
    <property type="molecule type" value="Genomic_DNA"/>
</dbReference>
<dbReference type="RefSeq" id="WP_003359499.1">
    <property type="nucleotide sequence ID" value="NC_010520.1"/>
</dbReference>
<dbReference type="SMR" id="B1KRT6"/>
<dbReference type="KEGG" id="cbl:CLK_3166"/>
<dbReference type="HOGENOM" id="CLU_140930_1_0_9"/>
<dbReference type="GO" id="GO:0043590">
    <property type="term" value="C:bacterial nucleoid"/>
    <property type="evidence" value="ECO:0007669"/>
    <property type="project" value="UniProtKB-UniRule"/>
</dbReference>
<dbReference type="GO" id="GO:0005829">
    <property type="term" value="C:cytosol"/>
    <property type="evidence" value="ECO:0007669"/>
    <property type="project" value="TreeGrafter"/>
</dbReference>
<dbReference type="GO" id="GO:0003677">
    <property type="term" value="F:DNA binding"/>
    <property type="evidence" value="ECO:0007669"/>
    <property type="project" value="UniProtKB-UniRule"/>
</dbReference>
<dbReference type="FunFam" id="3.30.1310.10:FF:000002">
    <property type="entry name" value="Nucleoid-associated protein IKC_06587"/>
    <property type="match status" value="1"/>
</dbReference>
<dbReference type="Gene3D" id="3.30.1310.10">
    <property type="entry name" value="Nucleoid-associated protein YbaB-like domain"/>
    <property type="match status" value="1"/>
</dbReference>
<dbReference type="HAMAP" id="MF_00274">
    <property type="entry name" value="DNA_YbaB_EbfC"/>
    <property type="match status" value="1"/>
</dbReference>
<dbReference type="InterPro" id="IPR036894">
    <property type="entry name" value="YbaB-like_sf"/>
</dbReference>
<dbReference type="InterPro" id="IPR004401">
    <property type="entry name" value="YbaB/EbfC"/>
</dbReference>
<dbReference type="NCBIfam" id="TIGR00103">
    <property type="entry name" value="DNA_YbaB_EbfC"/>
    <property type="match status" value="1"/>
</dbReference>
<dbReference type="PANTHER" id="PTHR33449">
    <property type="entry name" value="NUCLEOID-ASSOCIATED PROTEIN YBAB"/>
    <property type="match status" value="1"/>
</dbReference>
<dbReference type="PANTHER" id="PTHR33449:SF1">
    <property type="entry name" value="NUCLEOID-ASSOCIATED PROTEIN YBAB"/>
    <property type="match status" value="1"/>
</dbReference>
<dbReference type="Pfam" id="PF02575">
    <property type="entry name" value="YbaB_DNA_bd"/>
    <property type="match status" value="1"/>
</dbReference>
<dbReference type="PIRSF" id="PIRSF004555">
    <property type="entry name" value="UCP004555"/>
    <property type="match status" value="1"/>
</dbReference>
<dbReference type="SUPFAM" id="SSF82607">
    <property type="entry name" value="YbaB-like"/>
    <property type="match status" value="1"/>
</dbReference>
<proteinExistence type="inferred from homology"/>
<keyword id="KW-0963">Cytoplasm</keyword>
<keyword id="KW-0238">DNA-binding</keyword>
<gene>
    <name type="ordered locus">CLK_3166</name>
</gene>
<organism>
    <name type="scientific">Clostridium botulinum (strain Loch Maree / Type A3)</name>
    <dbReference type="NCBI Taxonomy" id="498214"/>
    <lineage>
        <taxon>Bacteria</taxon>
        <taxon>Bacillati</taxon>
        <taxon>Bacillota</taxon>
        <taxon>Clostridia</taxon>
        <taxon>Eubacteriales</taxon>
        <taxon>Clostridiaceae</taxon>
        <taxon>Clostridium</taxon>
    </lineage>
</organism>
<reference key="1">
    <citation type="journal article" date="2007" name="PLoS ONE">
        <title>Analysis of the neurotoxin complex genes in Clostridium botulinum A1-A4 and B1 strains: BoNT/A3, /Ba4 and /B1 clusters are located within plasmids.</title>
        <authorList>
            <person name="Smith T.J."/>
            <person name="Hill K.K."/>
            <person name="Foley B.T."/>
            <person name="Detter J.C."/>
            <person name="Munk A.C."/>
            <person name="Bruce D.C."/>
            <person name="Doggett N.A."/>
            <person name="Smith L.A."/>
            <person name="Marks J.D."/>
            <person name="Xie G."/>
            <person name="Brettin T.S."/>
        </authorList>
    </citation>
    <scope>NUCLEOTIDE SEQUENCE [LARGE SCALE GENOMIC DNA]</scope>
    <source>
        <strain>Loch Maree / Type A3</strain>
    </source>
</reference>
<protein>
    <recommendedName>
        <fullName evidence="1">Nucleoid-associated protein CLK_3166</fullName>
    </recommendedName>
</protein>
<name>Y3166_CLOBM</name>
<evidence type="ECO:0000255" key="1">
    <source>
        <dbReference type="HAMAP-Rule" id="MF_00274"/>
    </source>
</evidence>
<evidence type="ECO:0000256" key="2">
    <source>
        <dbReference type="SAM" id="MobiDB-lite"/>
    </source>
</evidence>
<comment type="function">
    <text evidence="1">Binds to DNA and alters its conformation. May be involved in regulation of gene expression, nucleoid organization and DNA protection.</text>
</comment>
<comment type="subunit">
    <text evidence="1">Homodimer.</text>
</comment>
<comment type="subcellular location">
    <subcellularLocation>
        <location evidence="1">Cytoplasm</location>
        <location evidence="1">Nucleoid</location>
    </subcellularLocation>
</comment>
<comment type="similarity">
    <text evidence="1">Belongs to the YbaB/EbfC family.</text>
</comment>
<accession>B1KRT6</accession>
<feature type="chain" id="PRO_1000114604" description="Nucleoid-associated protein CLK_3166">
    <location>
        <begin position="1"/>
        <end position="113"/>
    </location>
</feature>
<feature type="region of interest" description="Disordered" evidence="2">
    <location>
        <begin position="93"/>
        <end position="113"/>
    </location>
</feature>
<feature type="compositionally biased region" description="Basic and acidic residues" evidence="2">
    <location>
        <begin position="93"/>
        <end position="102"/>
    </location>
</feature>
<sequence>MARGGFPNMGGANMNNLMKQAQKLQQDMEKMQGEMEKKEFSATVGGGAVTAVANGKKQIVDIKIEPEVVDEDDIEMLEDLIMSACNEALKKAEEDTSSEVKRLTGGMNLPGMF</sequence>